<proteinExistence type="predicted"/>
<name>MALA_STRR6</name>
<sequence>MLPYPFSYFSSIWGFRKPLSKRFELNWFQLLFTSIFLISLSMVPIAIQNSSQETYPLETFIDNVYEPLTDKVVQDLSEHATIVDGTLTYTGTASQAPSVVIGPSQIKELPKDLQLHFDTNELVISKESKELTRISYRAIQTEGFKSKDSLTQAISKDWYQQNRVYISLFLVLGASFLFGLNFFIVSLGASLLLYITKKSRLFSFRTFKECYHFILNCLGLPTLITLILGLFGQNMTTLITVQNILFVLYLVTIFYKTHFRDPNYHK</sequence>
<feature type="chain" id="PRO_0000084560" description="Maltodextrose utilization protein MalA">
    <location>
        <begin position="1"/>
        <end position="266"/>
    </location>
</feature>
<feature type="sequence conflict" description="In Ref. 1; AAB88010." evidence="1" ref="1">
    <original>ISKDWYQQ</original>
    <variation>FIRLVPT</variation>
    <location>
        <begin position="154"/>
        <end position="161"/>
    </location>
</feature>
<feature type="sequence conflict" description="In Ref. 1; AAB88010." evidence="1" ref="1">
    <original>S</original>
    <variation>C</variation>
    <location>
        <position position="190"/>
    </location>
</feature>
<accession>P59204</accession>
<accession>Q08510</accession>
<reference key="1">
    <citation type="journal article" date="1993" name="J. Biol. Chem.">
        <title>Characterization of the Streptococcus pneumoniae maltosaccharide regulator MalR, a member of the LacI-GalR family of repressors displaying distinctive genetic features.</title>
        <authorList>
            <person name="Puyet A."/>
            <person name="Ibanez A.M."/>
            <person name="Espinosa M."/>
        </authorList>
    </citation>
    <scope>NUCLEOTIDE SEQUENCE [GENOMIC DNA]</scope>
</reference>
<reference key="2">
    <citation type="journal article" date="2001" name="J. Bacteriol.">
        <title>Genome of the bacterium Streptococcus pneumoniae strain R6.</title>
        <authorList>
            <person name="Hoskins J."/>
            <person name="Alborn W.E. Jr."/>
            <person name="Arnold J."/>
            <person name="Blaszczak L.C."/>
            <person name="Burgett S."/>
            <person name="DeHoff B.S."/>
            <person name="Estrem S.T."/>
            <person name="Fritz L."/>
            <person name="Fu D.-J."/>
            <person name="Fuller W."/>
            <person name="Geringer C."/>
            <person name="Gilmour R."/>
            <person name="Glass J.S."/>
            <person name="Khoja H."/>
            <person name="Kraft A.R."/>
            <person name="Lagace R.E."/>
            <person name="LeBlanc D.J."/>
            <person name="Lee L.N."/>
            <person name="Lefkowitz E.J."/>
            <person name="Lu J."/>
            <person name="Matsushima P."/>
            <person name="McAhren S.M."/>
            <person name="McHenney M."/>
            <person name="McLeaster K."/>
            <person name="Mundy C.W."/>
            <person name="Nicas T.I."/>
            <person name="Norris F.H."/>
            <person name="O'Gara M."/>
            <person name="Peery R.B."/>
            <person name="Robertson G.T."/>
            <person name="Rockey P."/>
            <person name="Sun P.-M."/>
            <person name="Winkler M.E."/>
            <person name="Yang Y."/>
            <person name="Young-Bellido M."/>
            <person name="Zhao G."/>
            <person name="Zook C.A."/>
            <person name="Baltz R.H."/>
            <person name="Jaskunas S.R."/>
            <person name="Rosteck P.R. Jr."/>
            <person name="Skatrud P.L."/>
            <person name="Glass J.I."/>
        </authorList>
    </citation>
    <scope>NUCLEOTIDE SEQUENCE [LARGE SCALE GENOMIC DNA]</scope>
    <source>
        <strain>ATCC BAA-255 / R6</strain>
    </source>
</reference>
<comment type="function">
    <text>Has a role in maltotetraose utilization.</text>
</comment>
<comment type="sequence caution" evidence="1">
    <conflict type="frameshift">
        <sequence resource="EMBL-CDS" id="AAB88010"/>
    </conflict>
</comment>
<gene>
    <name type="primary">malA</name>
    <name type="ordered locus">spr1921</name>
</gene>
<keyword id="KW-1185">Reference proteome</keyword>
<evidence type="ECO:0000305" key="1"/>
<protein>
    <recommendedName>
        <fullName>Maltodextrose utilization protein MalA</fullName>
    </recommendedName>
</protein>
<organism>
    <name type="scientific">Streptococcus pneumoniae (strain ATCC BAA-255 / R6)</name>
    <dbReference type="NCBI Taxonomy" id="171101"/>
    <lineage>
        <taxon>Bacteria</taxon>
        <taxon>Bacillati</taxon>
        <taxon>Bacillota</taxon>
        <taxon>Bacilli</taxon>
        <taxon>Lactobacillales</taxon>
        <taxon>Streptococcaceae</taxon>
        <taxon>Streptococcus</taxon>
    </lineage>
</organism>
<dbReference type="EMBL" id="L21856">
    <property type="protein sequence ID" value="AAB88010.1"/>
    <property type="status" value="ALT_FRAME"/>
    <property type="molecule type" value="Unassigned_DNA"/>
</dbReference>
<dbReference type="EMBL" id="AE007317">
    <property type="protein sequence ID" value="AAL00723.1"/>
    <property type="molecule type" value="Genomic_DNA"/>
</dbReference>
<dbReference type="PIR" id="F98111">
    <property type="entry name" value="F98111"/>
</dbReference>
<dbReference type="RefSeq" id="NP_359512.1">
    <property type="nucleotide sequence ID" value="NC_003098.1"/>
</dbReference>
<dbReference type="RefSeq" id="WP_000938218.1">
    <property type="nucleotide sequence ID" value="NC_003098.1"/>
</dbReference>
<dbReference type="STRING" id="171101.spr1921"/>
<dbReference type="KEGG" id="spr:spr1921"/>
<dbReference type="PATRIC" id="fig|171101.6.peg.2070"/>
<dbReference type="eggNOG" id="COG5521">
    <property type="taxonomic scope" value="Bacteria"/>
</dbReference>
<dbReference type="HOGENOM" id="CLU_082338_0_0_9"/>
<dbReference type="Proteomes" id="UP000000586">
    <property type="component" value="Chromosome"/>
</dbReference>
<dbReference type="InterPro" id="IPR016546">
    <property type="entry name" value="Maltodextrose_util_MalA"/>
</dbReference>
<dbReference type="PIRSF" id="PIRSF009136">
    <property type="entry name" value="Maltodextrose_util_MalA"/>
    <property type="match status" value="1"/>
</dbReference>